<organism>
    <name type="scientific">Pseudomonas aeruginosa (strain ATCC 15692 / DSM 22644 / CIP 104116 / JCM 14847 / LMG 12228 / 1C / PRS 101 / PAO1)</name>
    <dbReference type="NCBI Taxonomy" id="208964"/>
    <lineage>
        <taxon>Bacteria</taxon>
        <taxon>Pseudomonadati</taxon>
        <taxon>Pseudomonadota</taxon>
        <taxon>Gammaproteobacteria</taxon>
        <taxon>Pseudomonadales</taxon>
        <taxon>Pseudomonadaceae</taxon>
        <taxon>Pseudomonas</taxon>
    </lineage>
</organism>
<protein>
    <recommendedName>
        <fullName evidence="1">S-adenosylmethionine synthase</fullName>
        <shortName evidence="1">AdoMet synthase</shortName>
        <ecNumber evidence="1">2.5.1.6</ecNumber>
    </recommendedName>
    <alternativeName>
        <fullName evidence="1">MAT</fullName>
    </alternativeName>
    <alternativeName>
        <fullName evidence="1">Methionine adenosyltransferase</fullName>
    </alternativeName>
</protein>
<evidence type="ECO:0000255" key="1">
    <source>
        <dbReference type="HAMAP-Rule" id="MF_00086"/>
    </source>
</evidence>
<gene>
    <name evidence="1" type="primary">metK</name>
    <name type="ordered locus">PA0546</name>
</gene>
<dbReference type="EC" id="2.5.1.6" evidence="1"/>
<dbReference type="EMBL" id="AE004091">
    <property type="protein sequence ID" value="AAG03935.1"/>
    <property type="molecule type" value="Genomic_DNA"/>
</dbReference>
<dbReference type="PIR" id="H83576">
    <property type="entry name" value="H83576"/>
</dbReference>
<dbReference type="RefSeq" id="NP_249237.1">
    <property type="nucleotide sequence ID" value="NC_002516.2"/>
</dbReference>
<dbReference type="RefSeq" id="WP_003084948.1">
    <property type="nucleotide sequence ID" value="NZ_QZGE01000010.1"/>
</dbReference>
<dbReference type="SMR" id="Q9I5Z0"/>
<dbReference type="FunCoup" id="Q9I5Z0">
    <property type="interactions" value="746"/>
</dbReference>
<dbReference type="STRING" id="208964.PA0546"/>
<dbReference type="PaxDb" id="208964-PA0546"/>
<dbReference type="DNASU" id="878379"/>
<dbReference type="GeneID" id="77219067"/>
<dbReference type="GeneID" id="878379"/>
<dbReference type="KEGG" id="pae:PA0546"/>
<dbReference type="PATRIC" id="fig|208964.12.peg.578"/>
<dbReference type="PseudoCAP" id="PA0546"/>
<dbReference type="HOGENOM" id="CLU_041802_1_1_6"/>
<dbReference type="InParanoid" id="Q9I5Z0"/>
<dbReference type="OrthoDB" id="9801686at2"/>
<dbReference type="PhylomeDB" id="Q9I5Z0"/>
<dbReference type="BioCyc" id="PAER208964:G1FZ6-552-MONOMER"/>
<dbReference type="UniPathway" id="UPA00315">
    <property type="reaction ID" value="UER00080"/>
</dbReference>
<dbReference type="Proteomes" id="UP000002438">
    <property type="component" value="Chromosome"/>
</dbReference>
<dbReference type="GO" id="GO:0005829">
    <property type="term" value="C:cytosol"/>
    <property type="evidence" value="ECO:0000318"/>
    <property type="project" value="GO_Central"/>
</dbReference>
<dbReference type="GO" id="GO:0005524">
    <property type="term" value="F:ATP binding"/>
    <property type="evidence" value="ECO:0007669"/>
    <property type="project" value="UniProtKB-UniRule"/>
</dbReference>
<dbReference type="GO" id="GO:0000287">
    <property type="term" value="F:magnesium ion binding"/>
    <property type="evidence" value="ECO:0007669"/>
    <property type="project" value="UniProtKB-UniRule"/>
</dbReference>
<dbReference type="GO" id="GO:0004478">
    <property type="term" value="F:methionine adenosyltransferase activity"/>
    <property type="evidence" value="ECO:0000318"/>
    <property type="project" value="GO_Central"/>
</dbReference>
<dbReference type="GO" id="GO:0006730">
    <property type="term" value="P:one-carbon metabolic process"/>
    <property type="evidence" value="ECO:0007669"/>
    <property type="project" value="UniProtKB-KW"/>
</dbReference>
<dbReference type="GO" id="GO:0006556">
    <property type="term" value="P:S-adenosylmethionine biosynthetic process"/>
    <property type="evidence" value="ECO:0000318"/>
    <property type="project" value="GO_Central"/>
</dbReference>
<dbReference type="CDD" id="cd18079">
    <property type="entry name" value="S-AdoMet_synt"/>
    <property type="match status" value="1"/>
</dbReference>
<dbReference type="FunFam" id="3.30.300.10:FF:000003">
    <property type="entry name" value="S-adenosylmethionine synthase"/>
    <property type="match status" value="1"/>
</dbReference>
<dbReference type="Gene3D" id="3.30.300.10">
    <property type="match status" value="3"/>
</dbReference>
<dbReference type="HAMAP" id="MF_00086">
    <property type="entry name" value="S_AdoMet_synth1"/>
    <property type="match status" value="1"/>
</dbReference>
<dbReference type="InterPro" id="IPR022631">
    <property type="entry name" value="ADOMET_SYNTHASE_CS"/>
</dbReference>
<dbReference type="InterPro" id="IPR022630">
    <property type="entry name" value="S-AdoMet_synt_C"/>
</dbReference>
<dbReference type="InterPro" id="IPR022629">
    <property type="entry name" value="S-AdoMet_synt_central"/>
</dbReference>
<dbReference type="InterPro" id="IPR022628">
    <property type="entry name" value="S-AdoMet_synt_N"/>
</dbReference>
<dbReference type="InterPro" id="IPR002133">
    <property type="entry name" value="S-AdoMet_synthetase"/>
</dbReference>
<dbReference type="InterPro" id="IPR022636">
    <property type="entry name" value="S-AdoMet_synthetase_sfam"/>
</dbReference>
<dbReference type="NCBIfam" id="TIGR01034">
    <property type="entry name" value="metK"/>
    <property type="match status" value="1"/>
</dbReference>
<dbReference type="PANTHER" id="PTHR11964">
    <property type="entry name" value="S-ADENOSYLMETHIONINE SYNTHETASE"/>
    <property type="match status" value="1"/>
</dbReference>
<dbReference type="Pfam" id="PF02773">
    <property type="entry name" value="S-AdoMet_synt_C"/>
    <property type="match status" value="1"/>
</dbReference>
<dbReference type="Pfam" id="PF02772">
    <property type="entry name" value="S-AdoMet_synt_M"/>
    <property type="match status" value="1"/>
</dbReference>
<dbReference type="Pfam" id="PF00438">
    <property type="entry name" value="S-AdoMet_synt_N"/>
    <property type="match status" value="1"/>
</dbReference>
<dbReference type="PIRSF" id="PIRSF000497">
    <property type="entry name" value="MAT"/>
    <property type="match status" value="1"/>
</dbReference>
<dbReference type="SUPFAM" id="SSF55973">
    <property type="entry name" value="S-adenosylmethionine synthetase"/>
    <property type="match status" value="3"/>
</dbReference>
<dbReference type="PROSITE" id="PS00376">
    <property type="entry name" value="ADOMET_SYNTHASE_1"/>
    <property type="match status" value="1"/>
</dbReference>
<dbReference type="PROSITE" id="PS00377">
    <property type="entry name" value="ADOMET_SYNTHASE_2"/>
    <property type="match status" value="1"/>
</dbReference>
<sequence length="396" mass="42709">MSEYSVFTSESVSEGHPDKIADQISDAVLDAIIAKDKYARVACETLVKTGVAIIAGEVTTSAWVDLEELVRKVIIDIGYDSSDVGFDGATCGVLNIIGKQSVDINQGVDRAKPEDQGAGDQGLMFGYASNETDVLMPAPICFSHRLVERQAEARKSGLLPWLRPDAKSQVTCRYEGGKVVGIDAVVLSTQHNPEVSYNDLRDGVMELIIKQVLPAELLHKDTQFHINPTGNFVIGGPVGDCGLTGRKIIVDSYGGMARHGGGAFSGKDPSKVDRSAAYAGRYVAKNIVAAGLAERCEIQVSYAIGVAQPTSISINTFGTGKVSDEKIVQLVREHFDLRPYAITKMLDLLHPMYQPTAAYGHFGRHPFELTVDGDTFTAFTWEKTDKAALLRDAAGL</sequence>
<proteinExistence type="inferred from homology"/>
<comment type="function">
    <text evidence="1">Catalyzes the formation of S-adenosylmethionine (AdoMet) from methionine and ATP. The overall synthetic reaction is composed of two sequential steps, AdoMet formation and the subsequent tripolyphosphate hydrolysis which occurs prior to release of AdoMet from the enzyme.</text>
</comment>
<comment type="catalytic activity">
    <reaction evidence="1">
        <text>L-methionine + ATP + H2O = S-adenosyl-L-methionine + phosphate + diphosphate</text>
        <dbReference type="Rhea" id="RHEA:21080"/>
        <dbReference type="ChEBI" id="CHEBI:15377"/>
        <dbReference type="ChEBI" id="CHEBI:30616"/>
        <dbReference type="ChEBI" id="CHEBI:33019"/>
        <dbReference type="ChEBI" id="CHEBI:43474"/>
        <dbReference type="ChEBI" id="CHEBI:57844"/>
        <dbReference type="ChEBI" id="CHEBI:59789"/>
        <dbReference type="EC" id="2.5.1.6"/>
    </reaction>
</comment>
<comment type="cofactor">
    <cofactor evidence="1">
        <name>Mg(2+)</name>
        <dbReference type="ChEBI" id="CHEBI:18420"/>
    </cofactor>
    <text evidence="1">Binds 2 divalent ions per subunit.</text>
</comment>
<comment type="cofactor">
    <cofactor evidence="1">
        <name>K(+)</name>
        <dbReference type="ChEBI" id="CHEBI:29103"/>
    </cofactor>
    <text evidence="1">Binds 1 potassium ion per subunit.</text>
</comment>
<comment type="pathway">
    <text evidence="1">Amino-acid biosynthesis; S-adenosyl-L-methionine biosynthesis; S-adenosyl-L-methionine from L-methionine: step 1/1.</text>
</comment>
<comment type="subunit">
    <text evidence="1">Homotetramer; dimer of dimers.</text>
</comment>
<comment type="subcellular location">
    <subcellularLocation>
        <location evidence="1">Cytoplasm</location>
    </subcellularLocation>
</comment>
<comment type="similarity">
    <text evidence="1">Belongs to the AdoMet synthase family.</text>
</comment>
<name>METK_PSEAE</name>
<reference key="1">
    <citation type="journal article" date="2000" name="Nature">
        <title>Complete genome sequence of Pseudomonas aeruginosa PAO1, an opportunistic pathogen.</title>
        <authorList>
            <person name="Stover C.K."/>
            <person name="Pham X.-Q.T."/>
            <person name="Erwin A.L."/>
            <person name="Mizoguchi S.D."/>
            <person name="Warrener P."/>
            <person name="Hickey M.J."/>
            <person name="Brinkman F.S.L."/>
            <person name="Hufnagle W.O."/>
            <person name="Kowalik D.J."/>
            <person name="Lagrou M."/>
            <person name="Garber R.L."/>
            <person name="Goltry L."/>
            <person name="Tolentino E."/>
            <person name="Westbrock-Wadman S."/>
            <person name="Yuan Y."/>
            <person name="Brody L.L."/>
            <person name="Coulter S.N."/>
            <person name="Folger K.R."/>
            <person name="Kas A."/>
            <person name="Larbig K."/>
            <person name="Lim R.M."/>
            <person name="Smith K.A."/>
            <person name="Spencer D.H."/>
            <person name="Wong G.K.-S."/>
            <person name="Wu Z."/>
            <person name="Paulsen I.T."/>
            <person name="Reizer J."/>
            <person name="Saier M.H. Jr."/>
            <person name="Hancock R.E.W."/>
            <person name="Lory S."/>
            <person name="Olson M.V."/>
        </authorList>
    </citation>
    <scope>NUCLEOTIDE SEQUENCE [LARGE SCALE GENOMIC DNA]</scope>
    <source>
        <strain>ATCC 15692 / DSM 22644 / CIP 104116 / JCM 14847 / LMG 12228 / 1C / PRS 101 / PAO1</strain>
    </source>
</reference>
<keyword id="KW-0067">ATP-binding</keyword>
<keyword id="KW-0963">Cytoplasm</keyword>
<keyword id="KW-0460">Magnesium</keyword>
<keyword id="KW-0479">Metal-binding</keyword>
<keyword id="KW-0547">Nucleotide-binding</keyword>
<keyword id="KW-0554">One-carbon metabolism</keyword>
<keyword id="KW-0630">Potassium</keyword>
<keyword id="KW-1185">Reference proteome</keyword>
<keyword id="KW-0808">Transferase</keyword>
<feature type="chain" id="PRO_0000174572" description="S-adenosylmethionine synthase">
    <location>
        <begin position="1"/>
        <end position="396"/>
    </location>
</feature>
<feature type="region of interest" description="Flexible loop" evidence="1">
    <location>
        <begin position="100"/>
        <end position="110"/>
    </location>
</feature>
<feature type="binding site" description="in other chain" evidence="1">
    <location>
        <position position="16"/>
    </location>
    <ligand>
        <name>ATP</name>
        <dbReference type="ChEBI" id="CHEBI:30616"/>
        <note>ligand shared between two neighboring subunits</note>
    </ligand>
</feature>
<feature type="binding site" evidence="1">
    <location>
        <position position="18"/>
    </location>
    <ligand>
        <name>Mg(2+)</name>
        <dbReference type="ChEBI" id="CHEBI:18420"/>
    </ligand>
</feature>
<feature type="binding site" evidence="1">
    <location>
        <position position="44"/>
    </location>
    <ligand>
        <name>K(+)</name>
        <dbReference type="ChEBI" id="CHEBI:29103"/>
    </ligand>
</feature>
<feature type="binding site" description="in other chain" evidence="1">
    <location>
        <position position="57"/>
    </location>
    <ligand>
        <name>L-methionine</name>
        <dbReference type="ChEBI" id="CHEBI:57844"/>
        <note>ligand shared between two neighboring subunits</note>
    </ligand>
</feature>
<feature type="binding site" description="in other chain" evidence="1">
    <location>
        <position position="100"/>
    </location>
    <ligand>
        <name>L-methionine</name>
        <dbReference type="ChEBI" id="CHEBI:57844"/>
        <note>ligand shared between two neighboring subunits</note>
    </ligand>
</feature>
<feature type="binding site" description="in other chain" evidence="1">
    <location>
        <begin position="165"/>
        <end position="167"/>
    </location>
    <ligand>
        <name>ATP</name>
        <dbReference type="ChEBI" id="CHEBI:30616"/>
        <note>ligand shared between two neighboring subunits</note>
    </ligand>
</feature>
<feature type="binding site" evidence="1">
    <location>
        <position position="240"/>
    </location>
    <ligand>
        <name>ATP</name>
        <dbReference type="ChEBI" id="CHEBI:30616"/>
        <note>ligand shared between two neighboring subunits</note>
    </ligand>
</feature>
<feature type="binding site" evidence="1">
    <location>
        <position position="240"/>
    </location>
    <ligand>
        <name>L-methionine</name>
        <dbReference type="ChEBI" id="CHEBI:57844"/>
        <note>ligand shared between two neighboring subunits</note>
    </ligand>
</feature>
<feature type="binding site" description="in other chain" evidence="1">
    <location>
        <begin position="246"/>
        <end position="247"/>
    </location>
    <ligand>
        <name>ATP</name>
        <dbReference type="ChEBI" id="CHEBI:30616"/>
        <note>ligand shared between two neighboring subunits</note>
    </ligand>
</feature>
<feature type="binding site" evidence="1">
    <location>
        <position position="263"/>
    </location>
    <ligand>
        <name>ATP</name>
        <dbReference type="ChEBI" id="CHEBI:30616"/>
        <note>ligand shared between two neighboring subunits</note>
    </ligand>
</feature>
<feature type="binding site" evidence="1">
    <location>
        <position position="267"/>
    </location>
    <ligand>
        <name>ATP</name>
        <dbReference type="ChEBI" id="CHEBI:30616"/>
        <note>ligand shared between two neighboring subunits</note>
    </ligand>
</feature>
<feature type="binding site" description="in other chain" evidence="1">
    <location>
        <position position="271"/>
    </location>
    <ligand>
        <name>L-methionine</name>
        <dbReference type="ChEBI" id="CHEBI:57844"/>
        <note>ligand shared between two neighboring subunits</note>
    </ligand>
</feature>
<accession>Q9I5Z0</accession>